<organism>
    <name type="scientific">Aquifex aeolicus (strain VF5)</name>
    <dbReference type="NCBI Taxonomy" id="224324"/>
    <lineage>
        <taxon>Bacteria</taxon>
        <taxon>Pseudomonadati</taxon>
        <taxon>Aquificota</taxon>
        <taxon>Aquificia</taxon>
        <taxon>Aquificales</taxon>
        <taxon>Aquificaceae</taxon>
        <taxon>Aquifex</taxon>
    </lineage>
</organism>
<reference key="1">
    <citation type="journal article" date="1998" name="Nature">
        <title>The complete genome of the hyperthermophilic bacterium Aquifex aeolicus.</title>
        <authorList>
            <person name="Deckert G."/>
            <person name="Warren P.V."/>
            <person name="Gaasterland T."/>
            <person name="Young W.G."/>
            <person name="Lenox A.L."/>
            <person name="Graham D.E."/>
            <person name="Overbeek R."/>
            <person name="Snead M.A."/>
            <person name="Keller M."/>
            <person name="Aujay M."/>
            <person name="Huber R."/>
            <person name="Feldman R.A."/>
            <person name="Short J.M."/>
            <person name="Olsen G.J."/>
            <person name="Swanson R.V."/>
        </authorList>
    </citation>
    <scope>NUCLEOTIDE SEQUENCE [LARGE SCALE GENOMIC DNA]</scope>
    <source>
        <strain>VF5</strain>
    </source>
</reference>
<feature type="chain" id="PRO_0000189183" description="4-diphosphocytidyl-2-C-methyl-D-erythritol kinase">
    <location>
        <begin position="1"/>
        <end position="268"/>
    </location>
</feature>
<feature type="active site" evidence="1">
    <location>
        <position position="9"/>
    </location>
</feature>
<feature type="active site" evidence="1">
    <location>
        <position position="130"/>
    </location>
</feature>
<feature type="binding site" evidence="1">
    <location>
        <begin position="88"/>
        <end position="98"/>
    </location>
    <ligand>
        <name>ATP</name>
        <dbReference type="ChEBI" id="CHEBI:30616"/>
    </ligand>
</feature>
<feature type="strand" evidence="2">
    <location>
        <begin position="2"/>
        <end position="19"/>
    </location>
</feature>
<feature type="strand" evidence="2">
    <location>
        <begin position="25"/>
        <end position="46"/>
    </location>
</feature>
<feature type="strand" evidence="2">
    <location>
        <begin position="48"/>
        <end position="53"/>
    </location>
</feature>
<feature type="turn" evidence="2">
    <location>
        <begin position="57"/>
        <end position="59"/>
    </location>
</feature>
<feature type="helix" evidence="2">
    <location>
        <begin position="61"/>
        <end position="73"/>
    </location>
</feature>
<feature type="strand" evidence="2">
    <location>
        <begin position="79"/>
        <end position="84"/>
    </location>
</feature>
<feature type="strand" evidence="2">
    <location>
        <begin position="91"/>
        <end position="93"/>
    </location>
</feature>
<feature type="helix" evidence="2">
    <location>
        <begin position="95"/>
        <end position="110"/>
    </location>
</feature>
<feature type="helix" evidence="2">
    <location>
        <begin position="117"/>
        <end position="127"/>
    </location>
</feature>
<feature type="turn" evidence="2">
    <location>
        <begin position="129"/>
        <end position="131"/>
    </location>
</feature>
<feature type="helix" evidence="2">
    <location>
        <begin position="132"/>
        <end position="135"/>
    </location>
</feature>
<feature type="strand" evidence="2">
    <location>
        <begin position="138"/>
        <end position="143"/>
    </location>
</feature>
<feature type="turn" evidence="2">
    <location>
        <begin position="144"/>
        <end position="147"/>
    </location>
</feature>
<feature type="strand" evidence="2">
    <location>
        <begin position="148"/>
        <end position="151"/>
    </location>
</feature>
<feature type="strand" evidence="2">
    <location>
        <begin position="158"/>
        <end position="164"/>
    </location>
</feature>
<feature type="helix" evidence="2">
    <location>
        <begin position="171"/>
        <end position="176"/>
    </location>
</feature>
<feature type="helix" evidence="3">
    <location>
        <begin position="180"/>
        <end position="182"/>
    </location>
</feature>
<feature type="helix" evidence="2">
    <location>
        <begin position="186"/>
        <end position="197"/>
    </location>
</feature>
<feature type="helix" evidence="2">
    <location>
        <begin position="201"/>
        <end position="203"/>
    </location>
</feature>
<feature type="helix" evidence="2">
    <location>
        <begin position="207"/>
        <end position="215"/>
    </location>
</feature>
<feature type="helix" evidence="2">
    <location>
        <begin position="217"/>
        <end position="228"/>
    </location>
</feature>
<feature type="strand" evidence="2">
    <location>
        <begin position="242"/>
        <end position="246"/>
    </location>
</feature>
<feature type="helix" evidence="2">
    <location>
        <begin position="250"/>
        <end position="259"/>
    </location>
</feature>
<feature type="strand" evidence="2">
    <location>
        <begin position="262"/>
        <end position="268"/>
    </location>
</feature>
<comment type="function">
    <text evidence="1">Catalyzes the phosphorylation of the position 2 hydroxy group of 4-diphosphocytidyl-2C-methyl-D-erythritol.</text>
</comment>
<comment type="catalytic activity">
    <reaction evidence="1">
        <text>4-CDP-2-C-methyl-D-erythritol + ATP = 4-CDP-2-C-methyl-D-erythritol 2-phosphate + ADP + H(+)</text>
        <dbReference type="Rhea" id="RHEA:18437"/>
        <dbReference type="ChEBI" id="CHEBI:15378"/>
        <dbReference type="ChEBI" id="CHEBI:30616"/>
        <dbReference type="ChEBI" id="CHEBI:57823"/>
        <dbReference type="ChEBI" id="CHEBI:57919"/>
        <dbReference type="ChEBI" id="CHEBI:456216"/>
        <dbReference type="EC" id="2.7.1.148"/>
    </reaction>
</comment>
<comment type="pathway">
    <text evidence="1">Isoprenoid biosynthesis; isopentenyl diphosphate biosynthesis via DXP pathway; isopentenyl diphosphate from 1-deoxy-D-xylulose 5-phosphate: step 3/6.</text>
</comment>
<comment type="similarity">
    <text evidence="1">Belongs to the GHMP kinase family. IspE subfamily.</text>
</comment>
<sequence length="268" mass="29788">MIKVLSPAKINLGLWVLGRLPSGYHEILTLYQEIPFYDEIYIREGVLRVETNIGIPQEENLVYKGLREFERITGIEINYSIFIQKNIPPGAGLGGGSSNLAVVLKKVNELLGSPLSEEELRELVGSISADAPFFLLGKSAIGRGKGEVLEPVETEISGKITLVIPQVSSSTGRVYSSLREEHFVTPEYAEEKIQRIISGEVEEIENVLGDIARELYPEINEVYRFVEYLGFKPFVSGSGSTVYFFGGASEELKKAAKMRGWKVVELEL</sequence>
<evidence type="ECO:0000255" key="1">
    <source>
        <dbReference type="HAMAP-Rule" id="MF_00061"/>
    </source>
</evidence>
<evidence type="ECO:0007829" key="2">
    <source>
        <dbReference type="PDB" id="2V8P"/>
    </source>
</evidence>
<evidence type="ECO:0007829" key="3">
    <source>
        <dbReference type="PDB" id="2VF3"/>
    </source>
</evidence>
<keyword id="KW-0002">3D-structure</keyword>
<keyword id="KW-0067">ATP-binding</keyword>
<keyword id="KW-0414">Isoprene biosynthesis</keyword>
<keyword id="KW-0418">Kinase</keyword>
<keyword id="KW-0547">Nucleotide-binding</keyword>
<keyword id="KW-1185">Reference proteome</keyword>
<keyword id="KW-0808">Transferase</keyword>
<accession>O67060</accession>
<protein>
    <recommendedName>
        <fullName evidence="1">4-diphosphocytidyl-2-C-methyl-D-erythritol kinase</fullName>
        <shortName evidence="1">CMK</shortName>
        <ecNumber evidence="1">2.7.1.148</ecNumber>
    </recommendedName>
    <alternativeName>
        <fullName evidence="1">4-(cytidine-5'-diphospho)-2-C-methyl-D-erythritol kinase</fullName>
    </alternativeName>
</protein>
<gene>
    <name evidence="1" type="primary">ispE</name>
    <name type="ordered locus">aq_915</name>
</gene>
<name>ISPE_AQUAE</name>
<proteinExistence type="evidence at protein level"/>
<dbReference type="EC" id="2.7.1.148" evidence="1"/>
<dbReference type="EMBL" id="AE000657">
    <property type="protein sequence ID" value="AAC07027.1"/>
    <property type="molecule type" value="Genomic_DNA"/>
</dbReference>
<dbReference type="PIR" id="A70379">
    <property type="entry name" value="A70379"/>
</dbReference>
<dbReference type="RefSeq" id="NP_213622.1">
    <property type="nucleotide sequence ID" value="NC_000918.1"/>
</dbReference>
<dbReference type="RefSeq" id="WP_010880560.1">
    <property type="nucleotide sequence ID" value="NC_000918.1"/>
</dbReference>
<dbReference type="PDB" id="2V2Q">
    <property type="method" value="X-ray"/>
    <property type="resolution" value="2.30 A"/>
    <property type="chains" value="A/B=1-268"/>
</dbReference>
<dbReference type="PDB" id="2V2V">
    <property type="method" value="X-ray"/>
    <property type="resolution" value="2.40 A"/>
    <property type="chains" value="A/B=1-268"/>
</dbReference>
<dbReference type="PDB" id="2V2Z">
    <property type="method" value="X-ray"/>
    <property type="resolution" value="2.25 A"/>
    <property type="chains" value="A/B=1-268"/>
</dbReference>
<dbReference type="PDB" id="2V34">
    <property type="method" value="X-ray"/>
    <property type="resolution" value="2.30 A"/>
    <property type="chains" value="A/B=1-268"/>
</dbReference>
<dbReference type="PDB" id="2V8P">
    <property type="method" value="X-ray"/>
    <property type="resolution" value="2.10 A"/>
    <property type="chains" value="A/B=1-268"/>
</dbReference>
<dbReference type="PDB" id="2VF3">
    <property type="method" value="X-ray"/>
    <property type="resolution" value="2.20 A"/>
    <property type="chains" value="A/B=1-268"/>
</dbReference>
<dbReference type="PDBsum" id="2V2Q"/>
<dbReference type="PDBsum" id="2V2V"/>
<dbReference type="PDBsum" id="2V2Z"/>
<dbReference type="PDBsum" id="2V34"/>
<dbReference type="PDBsum" id="2V8P"/>
<dbReference type="PDBsum" id="2VF3"/>
<dbReference type="SMR" id="O67060"/>
<dbReference type="FunCoup" id="O67060">
    <property type="interactions" value="250"/>
</dbReference>
<dbReference type="STRING" id="224324.aq_915"/>
<dbReference type="EnsemblBacteria" id="AAC07027">
    <property type="protein sequence ID" value="AAC07027"/>
    <property type="gene ID" value="aq_915"/>
</dbReference>
<dbReference type="KEGG" id="aae:aq_915"/>
<dbReference type="PATRIC" id="fig|224324.8.peg.714"/>
<dbReference type="eggNOG" id="COG1947">
    <property type="taxonomic scope" value="Bacteria"/>
</dbReference>
<dbReference type="HOGENOM" id="CLU_053057_2_0_0"/>
<dbReference type="InParanoid" id="O67060"/>
<dbReference type="OrthoDB" id="9809438at2"/>
<dbReference type="BRENDA" id="2.7.1.148">
    <property type="organism ID" value="396"/>
</dbReference>
<dbReference type="UniPathway" id="UPA00056">
    <property type="reaction ID" value="UER00094"/>
</dbReference>
<dbReference type="EvolutionaryTrace" id="O67060"/>
<dbReference type="Proteomes" id="UP000000798">
    <property type="component" value="Chromosome"/>
</dbReference>
<dbReference type="GO" id="GO:0050515">
    <property type="term" value="F:4-(cytidine 5'-diphospho)-2-C-methyl-D-erythritol kinase activity"/>
    <property type="evidence" value="ECO:0000318"/>
    <property type="project" value="GO_Central"/>
</dbReference>
<dbReference type="GO" id="GO:0005524">
    <property type="term" value="F:ATP binding"/>
    <property type="evidence" value="ECO:0007669"/>
    <property type="project" value="UniProtKB-UniRule"/>
</dbReference>
<dbReference type="GO" id="GO:0019288">
    <property type="term" value="P:isopentenyl diphosphate biosynthetic process, methylerythritol 4-phosphate pathway"/>
    <property type="evidence" value="ECO:0007669"/>
    <property type="project" value="UniProtKB-UniRule"/>
</dbReference>
<dbReference type="GO" id="GO:0016114">
    <property type="term" value="P:terpenoid biosynthetic process"/>
    <property type="evidence" value="ECO:0007669"/>
    <property type="project" value="InterPro"/>
</dbReference>
<dbReference type="Gene3D" id="3.30.230.10">
    <property type="match status" value="1"/>
</dbReference>
<dbReference type="Gene3D" id="3.30.70.890">
    <property type="entry name" value="GHMP kinase, C-terminal domain"/>
    <property type="match status" value="1"/>
</dbReference>
<dbReference type="HAMAP" id="MF_00061">
    <property type="entry name" value="IspE"/>
    <property type="match status" value="1"/>
</dbReference>
<dbReference type="InterPro" id="IPR036554">
    <property type="entry name" value="GHMP_kinase_C_sf"/>
</dbReference>
<dbReference type="InterPro" id="IPR006204">
    <property type="entry name" value="GHMP_kinase_N_dom"/>
</dbReference>
<dbReference type="InterPro" id="IPR004424">
    <property type="entry name" value="IspE"/>
</dbReference>
<dbReference type="InterPro" id="IPR020568">
    <property type="entry name" value="Ribosomal_Su5_D2-typ_SF"/>
</dbReference>
<dbReference type="InterPro" id="IPR014721">
    <property type="entry name" value="Ribsml_uS5_D2-typ_fold_subgr"/>
</dbReference>
<dbReference type="NCBIfam" id="TIGR00154">
    <property type="entry name" value="ispE"/>
    <property type="match status" value="1"/>
</dbReference>
<dbReference type="NCBIfam" id="NF011205">
    <property type="entry name" value="PRK14611.1"/>
    <property type="match status" value="1"/>
</dbReference>
<dbReference type="PANTHER" id="PTHR43527">
    <property type="entry name" value="4-DIPHOSPHOCYTIDYL-2-C-METHYL-D-ERYTHRITOL KINASE, CHLOROPLASTIC"/>
    <property type="match status" value="1"/>
</dbReference>
<dbReference type="PANTHER" id="PTHR43527:SF2">
    <property type="entry name" value="4-DIPHOSPHOCYTIDYL-2-C-METHYL-D-ERYTHRITOL KINASE, CHLOROPLASTIC"/>
    <property type="match status" value="1"/>
</dbReference>
<dbReference type="Pfam" id="PF00288">
    <property type="entry name" value="GHMP_kinases_N"/>
    <property type="match status" value="1"/>
</dbReference>
<dbReference type="PIRSF" id="PIRSF010376">
    <property type="entry name" value="IspE"/>
    <property type="match status" value="1"/>
</dbReference>
<dbReference type="SUPFAM" id="SSF55060">
    <property type="entry name" value="GHMP Kinase, C-terminal domain"/>
    <property type="match status" value="1"/>
</dbReference>
<dbReference type="SUPFAM" id="SSF54211">
    <property type="entry name" value="Ribosomal protein S5 domain 2-like"/>
    <property type="match status" value="1"/>
</dbReference>